<proteinExistence type="inferred from homology"/>
<dbReference type="EC" id="2.1.1.33" evidence="2"/>
<dbReference type="EMBL" id="BA000004">
    <property type="protein sequence ID" value="BAB06980.1"/>
    <property type="molecule type" value="Genomic_DNA"/>
</dbReference>
<dbReference type="PIR" id="E84057">
    <property type="entry name" value="E84057"/>
</dbReference>
<dbReference type="RefSeq" id="WP_010899402.1">
    <property type="nucleotide sequence ID" value="NC_002570.2"/>
</dbReference>
<dbReference type="SMR" id="Q9K7U8"/>
<dbReference type="STRING" id="272558.gene:10729173"/>
<dbReference type="KEGG" id="bha:BH3261"/>
<dbReference type="eggNOG" id="COG0220">
    <property type="taxonomic scope" value="Bacteria"/>
</dbReference>
<dbReference type="HOGENOM" id="CLU_050910_2_1_9"/>
<dbReference type="OrthoDB" id="9802090at2"/>
<dbReference type="UniPathway" id="UPA00989"/>
<dbReference type="Proteomes" id="UP000001258">
    <property type="component" value="Chromosome"/>
</dbReference>
<dbReference type="GO" id="GO:0043527">
    <property type="term" value="C:tRNA methyltransferase complex"/>
    <property type="evidence" value="ECO:0007669"/>
    <property type="project" value="TreeGrafter"/>
</dbReference>
<dbReference type="GO" id="GO:0008176">
    <property type="term" value="F:tRNA (guanine(46)-N7)-methyltransferase activity"/>
    <property type="evidence" value="ECO:0007669"/>
    <property type="project" value="UniProtKB-UniRule"/>
</dbReference>
<dbReference type="CDD" id="cd02440">
    <property type="entry name" value="AdoMet_MTases"/>
    <property type="match status" value="1"/>
</dbReference>
<dbReference type="FunFam" id="3.40.50.150:FF:000035">
    <property type="entry name" value="tRNA (guanine-N(7)-)-methyltransferase"/>
    <property type="match status" value="1"/>
</dbReference>
<dbReference type="Gene3D" id="3.40.50.150">
    <property type="entry name" value="Vaccinia Virus protein VP39"/>
    <property type="match status" value="1"/>
</dbReference>
<dbReference type="HAMAP" id="MF_01057">
    <property type="entry name" value="tRNA_methyltr_TrmB"/>
    <property type="match status" value="1"/>
</dbReference>
<dbReference type="InterPro" id="IPR029063">
    <property type="entry name" value="SAM-dependent_MTases_sf"/>
</dbReference>
<dbReference type="InterPro" id="IPR003358">
    <property type="entry name" value="tRNA_(Gua-N-7)_MeTrfase_Trmb"/>
</dbReference>
<dbReference type="InterPro" id="IPR055361">
    <property type="entry name" value="tRNA_methyltr_TrmB_bact"/>
</dbReference>
<dbReference type="NCBIfam" id="NF001080">
    <property type="entry name" value="PRK00121.2-2"/>
    <property type="match status" value="1"/>
</dbReference>
<dbReference type="NCBIfam" id="TIGR00091">
    <property type="entry name" value="tRNA (guanosine(46)-N7)-methyltransferase TrmB"/>
    <property type="match status" value="1"/>
</dbReference>
<dbReference type="PANTHER" id="PTHR23417">
    <property type="entry name" value="3-DEOXY-D-MANNO-OCTULOSONIC-ACID TRANSFERASE/TRNA GUANINE-N 7 - -METHYLTRANSFERASE"/>
    <property type="match status" value="1"/>
</dbReference>
<dbReference type="PANTHER" id="PTHR23417:SF14">
    <property type="entry name" value="PENTACOTRIPEPTIDE-REPEAT REGION OF PRORP DOMAIN-CONTAINING PROTEIN"/>
    <property type="match status" value="1"/>
</dbReference>
<dbReference type="Pfam" id="PF02390">
    <property type="entry name" value="Methyltransf_4"/>
    <property type="match status" value="1"/>
</dbReference>
<dbReference type="SUPFAM" id="SSF53335">
    <property type="entry name" value="S-adenosyl-L-methionine-dependent methyltransferases"/>
    <property type="match status" value="1"/>
</dbReference>
<dbReference type="PROSITE" id="PS51625">
    <property type="entry name" value="SAM_MT_TRMB"/>
    <property type="match status" value="1"/>
</dbReference>
<reference key="1">
    <citation type="journal article" date="2000" name="Nucleic Acids Res.">
        <title>Complete genome sequence of the alkaliphilic bacterium Bacillus halodurans and genomic sequence comparison with Bacillus subtilis.</title>
        <authorList>
            <person name="Takami H."/>
            <person name="Nakasone K."/>
            <person name="Takaki Y."/>
            <person name="Maeno G."/>
            <person name="Sasaki R."/>
            <person name="Masui N."/>
            <person name="Fuji F."/>
            <person name="Hirama C."/>
            <person name="Nakamura Y."/>
            <person name="Ogasawara N."/>
            <person name="Kuhara S."/>
            <person name="Horikoshi K."/>
        </authorList>
    </citation>
    <scope>NUCLEOTIDE SEQUENCE [LARGE SCALE GENOMIC DNA]</scope>
    <source>
        <strain>ATCC BAA-125 / DSM 18197 / FERM 7344 / JCM 9153 / C-125</strain>
    </source>
</reference>
<accession>Q9K7U8</accession>
<evidence type="ECO:0000250" key="1"/>
<evidence type="ECO:0000255" key="2">
    <source>
        <dbReference type="HAMAP-Rule" id="MF_01057"/>
    </source>
</evidence>
<feature type="chain" id="PRO_0000171292" description="tRNA (guanine-N(7)-)-methyltransferase">
    <location>
        <begin position="1"/>
        <end position="220"/>
    </location>
</feature>
<feature type="region of interest" description="Interaction with RNA" evidence="2">
    <location>
        <begin position="124"/>
        <end position="129"/>
    </location>
</feature>
<feature type="active site" evidence="1">
    <location>
        <position position="118"/>
    </location>
</feature>
<feature type="binding site" evidence="2">
    <location>
        <position position="44"/>
    </location>
    <ligand>
        <name>S-adenosyl-L-methionine</name>
        <dbReference type="ChEBI" id="CHEBI:59789"/>
    </ligand>
</feature>
<feature type="binding site" evidence="2">
    <location>
        <position position="69"/>
    </location>
    <ligand>
        <name>S-adenosyl-L-methionine</name>
        <dbReference type="ChEBI" id="CHEBI:59789"/>
    </ligand>
</feature>
<feature type="binding site" evidence="2">
    <location>
        <position position="96"/>
    </location>
    <ligand>
        <name>S-adenosyl-L-methionine</name>
        <dbReference type="ChEBI" id="CHEBI:59789"/>
    </ligand>
</feature>
<feature type="binding site" evidence="2">
    <location>
        <position position="118"/>
    </location>
    <ligand>
        <name>S-adenosyl-L-methionine</name>
        <dbReference type="ChEBI" id="CHEBI:59789"/>
    </ligand>
</feature>
<feature type="binding site" evidence="2">
    <location>
        <position position="122"/>
    </location>
    <ligand>
        <name>substrate</name>
    </ligand>
</feature>
<feature type="binding site" evidence="2">
    <location>
        <position position="154"/>
    </location>
    <ligand>
        <name>substrate</name>
    </ligand>
</feature>
<feature type="binding site" evidence="2">
    <location>
        <begin position="191"/>
        <end position="194"/>
    </location>
    <ligand>
        <name>substrate</name>
    </ligand>
</feature>
<protein>
    <recommendedName>
        <fullName evidence="2">tRNA (guanine-N(7)-)-methyltransferase</fullName>
        <ecNumber evidence="2">2.1.1.33</ecNumber>
    </recommendedName>
    <alternativeName>
        <fullName evidence="2">tRNA (guanine(46)-N(7))-methyltransferase</fullName>
    </alternativeName>
    <alternativeName>
        <fullName evidence="2">tRNA(m7G46)-methyltransferase</fullName>
    </alternativeName>
</protein>
<keyword id="KW-0489">Methyltransferase</keyword>
<keyword id="KW-1185">Reference proteome</keyword>
<keyword id="KW-0949">S-adenosyl-L-methionine</keyword>
<keyword id="KW-0808">Transferase</keyword>
<keyword id="KW-0819">tRNA processing</keyword>
<sequence>MRLRNKPWARDAIAQNPDLVIQQPATWKGNWHRCFGRQAPLYIEVGTGKGQFLTGMAKHHPEINFIGIERYESVLVTAMERAKEAELTNLKFLSEDVYDLLDFFADGEVSRLFINFTDPWPKKRHEKRRLTYKDFLAKYEIVLKEKGDIHFKTDNQGLFEYSLHSFSKYGMILHNVSLDLHNSDFEGNIKTEYEEKFAKKGMRIYRCEAQFRTNEESHNL</sequence>
<gene>
    <name evidence="2" type="primary">trmB</name>
    <name type="ordered locus">BH3261</name>
</gene>
<organism>
    <name type="scientific">Halalkalibacterium halodurans (strain ATCC BAA-125 / DSM 18197 / FERM 7344 / JCM 9153 / C-125)</name>
    <name type="common">Bacillus halodurans</name>
    <dbReference type="NCBI Taxonomy" id="272558"/>
    <lineage>
        <taxon>Bacteria</taxon>
        <taxon>Bacillati</taxon>
        <taxon>Bacillota</taxon>
        <taxon>Bacilli</taxon>
        <taxon>Bacillales</taxon>
        <taxon>Bacillaceae</taxon>
        <taxon>Halalkalibacterium (ex Joshi et al. 2022)</taxon>
    </lineage>
</organism>
<comment type="function">
    <text evidence="2">Catalyzes the formation of N(7)-methylguanine at position 46 (m7G46) in tRNA.</text>
</comment>
<comment type="catalytic activity">
    <reaction evidence="2">
        <text>guanosine(46) in tRNA + S-adenosyl-L-methionine = N(7)-methylguanosine(46) in tRNA + S-adenosyl-L-homocysteine</text>
        <dbReference type="Rhea" id="RHEA:42708"/>
        <dbReference type="Rhea" id="RHEA-COMP:10188"/>
        <dbReference type="Rhea" id="RHEA-COMP:10189"/>
        <dbReference type="ChEBI" id="CHEBI:57856"/>
        <dbReference type="ChEBI" id="CHEBI:59789"/>
        <dbReference type="ChEBI" id="CHEBI:74269"/>
        <dbReference type="ChEBI" id="CHEBI:74480"/>
        <dbReference type="EC" id="2.1.1.33"/>
    </reaction>
</comment>
<comment type="pathway">
    <text evidence="2">tRNA modification; N(7)-methylguanine-tRNA biosynthesis.</text>
</comment>
<comment type="similarity">
    <text evidence="2">Belongs to the class I-like SAM-binding methyltransferase superfamily. TrmB family.</text>
</comment>
<name>TRMB_HALH5</name>